<evidence type="ECO:0000255" key="1">
    <source>
        <dbReference type="HAMAP-Rule" id="MF_00291"/>
    </source>
</evidence>
<evidence type="ECO:0000256" key="2">
    <source>
        <dbReference type="SAM" id="MobiDB-lite"/>
    </source>
</evidence>
<evidence type="ECO:0000305" key="3"/>
<name>RS2_LACDB</name>
<keyword id="KW-0687">Ribonucleoprotein</keyword>
<keyword id="KW-0689">Ribosomal protein</keyword>
<sequence>MSVVSMKQLLEAGVHFGHQTRRWDPKMKPYIFTQRNDIYIIDLQKTIKMLDDAYNYVKAVAQDDGVFLFVGTKKQAQEAIAEEATRAGQYYVNQRWLGGTLTNWTTIQSRVKRLKDLKKMAEDGTFDVLPKKEVSLLTKEMDKLQKFLGGIEDMPRIPDVMFVVDPKKEKIAVHEANKLGIPVVAMVDTNTDPTPIDVIIPSNDDAIRAIRLIAGTMADAVIEGKQGADNADVEKELSESVEENSAEEVDDAE</sequence>
<gene>
    <name evidence="1" type="primary">rpsB</name>
    <name type="ordered locus">LBUL_1254</name>
</gene>
<proteinExistence type="inferred from homology"/>
<organism>
    <name type="scientific">Lactobacillus delbrueckii subsp. bulgaricus (strain ATCC BAA-365 / Lb-18)</name>
    <dbReference type="NCBI Taxonomy" id="321956"/>
    <lineage>
        <taxon>Bacteria</taxon>
        <taxon>Bacillati</taxon>
        <taxon>Bacillota</taxon>
        <taxon>Bacilli</taxon>
        <taxon>Lactobacillales</taxon>
        <taxon>Lactobacillaceae</taxon>
        <taxon>Lactobacillus</taxon>
    </lineage>
</organism>
<dbReference type="EMBL" id="CP000412">
    <property type="protein sequence ID" value="ABJ58780.1"/>
    <property type="molecule type" value="Genomic_DNA"/>
</dbReference>
<dbReference type="RefSeq" id="WP_011544006.1">
    <property type="nucleotide sequence ID" value="NC_008529.1"/>
</dbReference>
<dbReference type="SMR" id="Q049U2"/>
<dbReference type="KEGG" id="lbu:LBUL_1254"/>
<dbReference type="HOGENOM" id="CLU_040318_1_2_9"/>
<dbReference type="BioCyc" id="LDEL321956:LBUL_RS05890-MONOMER"/>
<dbReference type="GO" id="GO:0022627">
    <property type="term" value="C:cytosolic small ribosomal subunit"/>
    <property type="evidence" value="ECO:0007669"/>
    <property type="project" value="TreeGrafter"/>
</dbReference>
<dbReference type="GO" id="GO:0003735">
    <property type="term" value="F:structural constituent of ribosome"/>
    <property type="evidence" value="ECO:0007669"/>
    <property type="project" value="InterPro"/>
</dbReference>
<dbReference type="GO" id="GO:0006412">
    <property type="term" value="P:translation"/>
    <property type="evidence" value="ECO:0007669"/>
    <property type="project" value="UniProtKB-UniRule"/>
</dbReference>
<dbReference type="CDD" id="cd01425">
    <property type="entry name" value="RPS2"/>
    <property type="match status" value="1"/>
</dbReference>
<dbReference type="FunFam" id="1.10.287.610:FF:000001">
    <property type="entry name" value="30S ribosomal protein S2"/>
    <property type="match status" value="1"/>
</dbReference>
<dbReference type="Gene3D" id="3.40.50.10490">
    <property type="entry name" value="Glucose-6-phosphate isomerase like protein, domain 1"/>
    <property type="match status" value="1"/>
</dbReference>
<dbReference type="Gene3D" id="1.10.287.610">
    <property type="entry name" value="Helix hairpin bin"/>
    <property type="match status" value="1"/>
</dbReference>
<dbReference type="HAMAP" id="MF_00291_B">
    <property type="entry name" value="Ribosomal_uS2_B"/>
    <property type="match status" value="1"/>
</dbReference>
<dbReference type="InterPro" id="IPR001865">
    <property type="entry name" value="Ribosomal_uS2"/>
</dbReference>
<dbReference type="InterPro" id="IPR005706">
    <property type="entry name" value="Ribosomal_uS2_bac/mit/plastid"/>
</dbReference>
<dbReference type="InterPro" id="IPR018130">
    <property type="entry name" value="Ribosomal_uS2_CS"/>
</dbReference>
<dbReference type="InterPro" id="IPR023591">
    <property type="entry name" value="Ribosomal_uS2_flav_dom_sf"/>
</dbReference>
<dbReference type="NCBIfam" id="TIGR01011">
    <property type="entry name" value="rpsB_bact"/>
    <property type="match status" value="1"/>
</dbReference>
<dbReference type="PANTHER" id="PTHR12534">
    <property type="entry name" value="30S RIBOSOMAL PROTEIN S2 PROKARYOTIC AND ORGANELLAR"/>
    <property type="match status" value="1"/>
</dbReference>
<dbReference type="PANTHER" id="PTHR12534:SF0">
    <property type="entry name" value="SMALL RIBOSOMAL SUBUNIT PROTEIN US2M"/>
    <property type="match status" value="1"/>
</dbReference>
<dbReference type="Pfam" id="PF00318">
    <property type="entry name" value="Ribosomal_S2"/>
    <property type="match status" value="1"/>
</dbReference>
<dbReference type="PRINTS" id="PR00395">
    <property type="entry name" value="RIBOSOMALS2"/>
</dbReference>
<dbReference type="SUPFAM" id="SSF52313">
    <property type="entry name" value="Ribosomal protein S2"/>
    <property type="match status" value="1"/>
</dbReference>
<dbReference type="PROSITE" id="PS00962">
    <property type="entry name" value="RIBOSOMAL_S2_1"/>
    <property type="match status" value="1"/>
</dbReference>
<dbReference type="PROSITE" id="PS00963">
    <property type="entry name" value="RIBOSOMAL_S2_2"/>
    <property type="match status" value="1"/>
</dbReference>
<comment type="similarity">
    <text evidence="1">Belongs to the universal ribosomal protein uS2 family.</text>
</comment>
<protein>
    <recommendedName>
        <fullName evidence="1">Small ribosomal subunit protein uS2</fullName>
    </recommendedName>
    <alternativeName>
        <fullName evidence="3">30S ribosomal protein S2</fullName>
    </alternativeName>
</protein>
<feature type="chain" id="PRO_1000003984" description="Small ribosomal subunit protein uS2">
    <location>
        <begin position="1"/>
        <end position="253"/>
    </location>
</feature>
<feature type="region of interest" description="Disordered" evidence="2">
    <location>
        <begin position="226"/>
        <end position="253"/>
    </location>
</feature>
<feature type="compositionally biased region" description="Acidic residues" evidence="2">
    <location>
        <begin position="239"/>
        <end position="253"/>
    </location>
</feature>
<reference key="1">
    <citation type="journal article" date="2006" name="Proc. Natl. Acad. Sci. U.S.A.">
        <title>Comparative genomics of the lactic acid bacteria.</title>
        <authorList>
            <person name="Makarova K.S."/>
            <person name="Slesarev A."/>
            <person name="Wolf Y.I."/>
            <person name="Sorokin A."/>
            <person name="Mirkin B."/>
            <person name="Koonin E.V."/>
            <person name="Pavlov A."/>
            <person name="Pavlova N."/>
            <person name="Karamychev V."/>
            <person name="Polouchine N."/>
            <person name="Shakhova V."/>
            <person name="Grigoriev I."/>
            <person name="Lou Y."/>
            <person name="Rohksar D."/>
            <person name="Lucas S."/>
            <person name="Huang K."/>
            <person name="Goodstein D.M."/>
            <person name="Hawkins T."/>
            <person name="Plengvidhya V."/>
            <person name="Welker D."/>
            <person name="Hughes J."/>
            <person name="Goh Y."/>
            <person name="Benson A."/>
            <person name="Baldwin K."/>
            <person name="Lee J.-H."/>
            <person name="Diaz-Muniz I."/>
            <person name="Dosti B."/>
            <person name="Smeianov V."/>
            <person name="Wechter W."/>
            <person name="Barabote R."/>
            <person name="Lorca G."/>
            <person name="Altermann E."/>
            <person name="Barrangou R."/>
            <person name="Ganesan B."/>
            <person name="Xie Y."/>
            <person name="Rawsthorne H."/>
            <person name="Tamir D."/>
            <person name="Parker C."/>
            <person name="Breidt F."/>
            <person name="Broadbent J.R."/>
            <person name="Hutkins R."/>
            <person name="O'Sullivan D."/>
            <person name="Steele J."/>
            <person name="Unlu G."/>
            <person name="Saier M.H. Jr."/>
            <person name="Klaenhammer T."/>
            <person name="Richardson P."/>
            <person name="Kozyavkin S."/>
            <person name="Weimer B.C."/>
            <person name="Mills D.A."/>
        </authorList>
    </citation>
    <scope>NUCLEOTIDE SEQUENCE [LARGE SCALE GENOMIC DNA]</scope>
    <source>
        <strain>ATCC BAA-365 / Lb-18</strain>
    </source>
</reference>
<accession>Q049U2</accession>